<name>PYRD_SCHPO</name>
<organism>
    <name type="scientific">Schizosaccharomyces pombe (strain 972 / ATCC 24843)</name>
    <name type="common">Fission yeast</name>
    <dbReference type="NCBI Taxonomy" id="284812"/>
    <lineage>
        <taxon>Eukaryota</taxon>
        <taxon>Fungi</taxon>
        <taxon>Dikarya</taxon>
        <taxon>Ascomycota</taxon>
        <taxon>Taphrinomycotina</taxon>
        <taxon>Schizosaccharomycetes</taxon>
        <taxon>Schizosaccharomycetales</taxon>
        <taxon>Schizosaccharomycetaceae</taxon>
        <taxon>Schizosaccharomyces</taxon>
    </lineage>
</organism>
<reference key="1">
    <citation type="journal article" date="1992" name="Proc. Natl. Acad. Sci. U.S.A.">
        <title>Divergent evolution of pyrimidine biosynthesis between anaerobic and aerobic yeasts.</title>
        <authorList>
            <person name="Nagy M."/>
            <person name="Lacroute F."/>
            <person name="Thomas D."/>
        </authorList>
    </citation>
    <scope>NUCLEOTIDE SEQUENCE [MRNA]</scope>
    <scope>FUNCTION</scope>
    <scope>SUBCELLULAR LOCATION</scope>
</reference>
<reference key="2">
    <citation type="journal article" date="2002" name="Nature">
        <title>The genome sequence of Schizosaccharomyces pombe.</title>
        <authorList>
            <person name="Wood V."/>
            <person name="Gwilliam R."/>
            <person name="Rajandream M.A."/>
            <person name="Lyne M.H."/>
            <person name="Lyne R."/>
            <person name="Stewart A."/>
            <person name="Sgouros J.G."/>
            <person name="Peat N."/>
            <person name="Hayles J."/>
            <person name="Baker S.G."/>
            <person name="Basham D."/>
            <person name="Bowman S."/>
            <person name="Brooks K."/>
            <person name="Brown D."/>
            <person name="Brown S."/>
            <person name="Chillingworth T."/>
            <person name="Churcher C.M."/>
            <person name="Collins M."/>
            <person name="Connor R."/>
            <person name="Cronin A."/>
            <person name="Davis P."/>
            <person name="Feltwell T."/>
            <person name="Fraser A."/>
            <person name="Gentles S."/>
            <person name="Goble A."/>
            <person name="Hamlin N."/>
            <person name="Harris D.E."/>
            <person name="Hidalgo J."/>
            <person name="Hodgson G."/>
            <person name="Holroyd S."/>
            <person name="Hornsby T."/>
            <person name="Howarth S."/>
            <person name="Huckle E.J."/>
            <person name="Hunt S."/>
            <person name="Jagels K."/>
            <person name="James K.D."/>
            <person name="Jones L."/>
            <person name="Jones M."/>
            <person name="Leather S."/>
            <person name="McDonald S."/>
            <person name="McLean J."/>
            <person name="Mooney P."/>
            <person name="Moule S."/>
            <person name="Mungall K.L."/>
            <person name="Murphy L.D."/>
            <person name="Niblett D."/>
            <person name="Odell C."/>
            <person name="Oliver K."/>
            <person name="O'Neil S."/>
            <person name="Pearson D."/>
            <person name="Quail M.A."/>
            <person name="Rabbinowitsch E."/>
            <person name="Rutherford K.M."/>
            <person name="Rutter S."/>
            <person name="Saunders D."/>
            <person name="Seeger K."/>
            <person name="Sharp S."/>
            <person name="Skelton J."/>
            <person name="Simmonds M.N."/>
            <person name="Squares R."/>
            <person name="Squares S."/>
            <person name="Stevens K."/>
            <person name="Taylor K."/>
            <person name="Taylor R.G."/>
            <person name="Tivey A."/>
            <person name="Walsh S.V."/>
            <person name="Warren T."/>
            <person name="Whitehead S."/>
            <person name="Woodward J.R."/>
            <person name="Volckaert G."/>
            <person name="Aert R."/>
            <person name="Robben J."/>
            <person name="Grymonprez B."/>
            <person name="Weltjens I."/>
            <person name="Vanstreels E."/>
            <person name="Rieger M."/>
            <person name="Schaefer M."/>
            <person name="Mueller-Auer S."/>
            <person name="Gabel C."/>
            <person name="Fuchs M."/>
            <person name="Duesterhoeft A."/>
            <person name="Fritzc C."/>
            <person name="Holzer E."/>
            <person name="Moestl D."/>
            <person name="Hilbert H."/>
            <person name="Borzym K."/>
            <person name="Langer I."/>
            <person name="Beck A."/>
            <person name="Lehrach H."/>
            <person name="Reinhardt R."/>
            <person name="Pohl T.M."/>
            <person name="Eger P."/>
            <person name="Zimmermann W."/>
            <person name="Wedler H."/>
            <person name="Wambutt R."/>
            <person name="Purnelle B."/>
            <person name="Goffeau A."/>
            <person name="Cadieu E."/>
            <person name="Dreano S."/>
            <person name="Gloux S."/>
            <person name="Lelaure V."/>
            <person name="Mottier S."/>
            <person name="Galibert F."/>
            <person name="Aves S.J."/>
            <person name="Xiang Z."/>
            <person name="Hunt C."/>
            <person name="Moore K."/>
            <person name="Hurst S.M."/>
            <person name="Lucas M."/>
            <person name="Rochet M."/>
            <person name="Gaillardin C."/>
            <person name="Tallada V.A."/>
            <person name="Garzon A."/>
            <person name="Thode G."/>
            <person name="Daga R.R."/>
            <person name="Cruzado L."/>
            <person name="Jimenez J."/>
            <person name="Sanchez M."/>
            <person name="del Rey F."/>
            <person name="Benito J."/>
            <person name="Dominguez A."/>
            <person name="Revuelta J.L."/>
            <person name="Moreno S."/>
            <person name="Armstrong J."/>
            <person name="Forsburg S.L."/>
            <person name="Cerutti L."/>
            <person name="Lowe T."/>
            <person name="McCombie W.R."/>
            <person name="Paulsen I."/>
            <person name="Potashkin J."/>
            <person name="Shpakovski G.V."/>
            <person name="Ussery D."/>
            <person name="Barrell B.G."/>
            <person name="Nurse P."/>
        </authorList>
    </citation>
    <scope>NUCLEOTIDE SEQUENCE [LARGE SCALE GENOMIC DNA]</scope>
    <source>
        <strain>972 / ATCC 24843</strain>
    </source>
</reference>
<reference key="3">
    <citation type="journal article" date="2004" name="FEBS Lett.">
        <title>Two different dihydroorotate dehydrogenases from yeast Saccharomyces kluyveri.</title>
        <authorList>
            <person name="Zameitat E."/>
            <person name="Knecht W."/>
            <person name="Piskur J."/>
            <person name="Loeffler M."/>
        </authorList>
    </citation>
    <scope>FUNCTION</scope>
    <scope>BIOPHYSICOCHEMICAL PROPERTIES</scope>
</reference>
<reference key="4">
    <citation type="journal article" date="2004" name="Mol. Genet. Genomics">
        <title>Horizontal gene transfer promoted evolution of the ability to propagate under anaerobic conditions in yeasts.</title>
        <authorList>
            <person name="Gojkovic Z."/>
            <person name="Knecht W."/>
            <person name="Zameitat E."/>
            <person name="Warneboldt J."/>
            <person name="Coutelis J.-B."/>
            <person name="Pynyaha Y."/>
            <person name="Neuveglise C."/>
            <person name="Moeller K."/>
            <person name="Loeffler M."/>
            <person name="Piskur J."/>
        </authorList>
    </citation>
    <scope>FUNCTION</scope>
</reference>
<reference key="5">
    <citation type="journal article" date="2008" name="J. Proteome Res.">
        <title>Phosphoproteome analysis of fission yeast.</title>
        <authorList>
            <person name="Wilson-Grady J.T."/>
            <person name="Villen J."/>
            <person name="Gygi S.P."/>
        </authorList>
    </citation>
    <scope>PHOSPHORYLATION [LARGE SCALE ANALYSIS] AT SER-168</scope>
    <scope>IDENTIFICATION BY MASS SPECTROMETRY</scope>
</reference>
<comment type="function">
    <text evidence="3 4 5">In the de novo pyrimidine biosynthesis pathway, catalyzes the stereospecific oxidation of (S)-dihydroorotate to orotate with reduction of flavin and the transfer of electrons to ubiquinone, which is part of the respiratory chain. Does not use fumarate and NAD as electron acceptors.</text>
</comment>
<comment type="catalytic activity">
    <reaction>
        <text>(S)-dihydroorotate + a quinone = orotate + a quinol</text>
        <dbReference type="Rhea" id="RHEA:30187"/>
        <dbReference type="ChEBI" id="CHEBI:24646"/>
        <dbReference type="ChEBI" id="CHEBI:30839"/>
        <dbReference type="ChEBI" id="CHEBI:30864"/>
        <dbReference type="ChEBI" id="CHEBI:132124"/>
        <dbReference type="EC" id="1.3.5.2"/>
    </reaction>
</comment>
<comment type="cofactor">
    <cofactor>
        <name>FMN</name>
        <dbReference type="ChEBI" id="CHEBI:58210"/>
    </cofactor>
    <text>Binds 1 FMN per subunit.</text>
</comment>
<comment type="biophysicochemical properties">
    <kinetics>
        <KM evidence="5">257 uM for (S)-dihydroorotate</KM>
        <KM evidence="5">109 uM for decylubiquinone</KM>
        <Vmax evidence="5">2.0 umol/min/mg enzyme</Vmax>
    </kinetics>
</comment>
<comment type="pathway">
    <text>Pyrimidine metabolism; UMP biosynthesis via de novo pathway; orotate from (S)-dihydroorotate (quinone route): step 1/1.</text>
</comment>
<comment type="subcellular location">
    <subcellularLocation>
        <location evidence="7">Mitochondrion inner membrane</location>
        <topology evidence="7">Single-pass membrane protein</topology>
    </subcellularLocation>
</comment>
<comment type="similarity">
    <text evidence="7">Belongs to the dihydroorotate dehydrogenase family. Type 2 subfamily.</text>
</comment>
<sequence length="443" mass="48296">MYQRSLFRGVAQGLKRSSVRFQSTSSGSSNGNFFLRHWKLLSVIGSFTAGVAIYDMSDVRSFIHGRIEMPLFHAFTTPEFSHRVAILAASWGITPKDRVADDPSLAVEVWGKKFCNPIGLAAGFDKQADAISGLLNFGFSYLEIGSVTPKPQPGNPKPRYFRLKPDLSVINRYGFNSIGHDAILAKIQKRVRKYIAKTSPQLLKQFDANPASCTDPAVLGVPRSLIPNKFLGINLGKNKNGNEIEDYVEGVRTFGNFADILVINVSSPNTPGLRNLQKKSALSTLLTAVVSERNKLNSPHPPVLVKIAPDLNEEELTDIADVLKKCKIDGVIVGNTTVQRPKTLKSTSHVEETGGLSGPPLKPIALNTLRTLRKHLSSDIPIIGCGGISSGKDAIEYARAGATMVQVYTALGYDGPVIAHKIKQEILAELKGKRWVDIIGKEE</sequence>
<keyword id="KW-0285">Flavoprotein</keyword>
<keyword id="KW-0288">FMN</keyword>
<keyword id="KW-0472">Membrane</keyword>
<keyword id="KW-0496">Mitochondrion</keyword>
<keyword id="KW-0999">Mitochondrion inner membrane</keyword>
<keyword id="KW-0560">Oxidoreductase</keyword>
<keyword id="KW-0597">Phosphoprotein</keyword>
<keyword id="KW-0665">Pyrimidine biosynthesis</keyword>
<keyword id="KW-1185">Reference proteome</keyword>
<keyword id="KW-0809">Transit peptide</keyword>
<keyword id="KW-0812">Transmembrane</keyword>
<keyword id="KW-1133">Transmembrane helix</keyword>
<accession>P32747</accession>
<feature type="transit peptide" description="Mitochondrion" evidence="2">
    <location>
        <begin position="1"/>
        <end position="21"/>
    </location>
</feature>
<feature type="chain" id="PRO_0000029896" description="Dihydroorotate dehydrogenase (quinone), mitochondrial">
    <location>
        <begin position="22"/>
        <end position="443"/>
    </location>
</feature>
<feature type="transmembrane region" description="Helical" evidence="2">
    <location>
        <begin position="38"/>
        <end position="54"/>
    </location>
</feature>
<feature type="active site" description="Nucleophile" evidence="1">
    <location>
        <position position="267"/>
    </location>
</feature>
<feature type="binding site" evidence="1">
    <location>
        <begin position="122"/>
        <end position="126"/>
    </location>
    <ligand>
        <name>FMN</name>
        <dbReference type="ChEBI" id="CHEBI:58210"/>
    </ligand>
</feature>
<feature type="binding site" evidence="1">
    <location>
        <position position="126"/>
    </location>
    <ligand>
        <name>substrate</name>
    </ligand>
</feature>
<feature type="binding site" evidence="1">
    <location>
        <position position="146"/>
    </location>
    <ligand>
        <name>FMN</name>
        <dbReference type="ChEBI" id="CHEBI:58210"/>
    </ligand>
</feature>
<feature type="binding site" evidence="1">
    <location>
        <begin position="171"/>
        <end position="175"/>
    </location>
    <ligand>
        <name>substrate</name>
    </ligand>
</feature>
<feature type="binding site" evidence="1">
    <location>
        <position position="234"/>
    </location>
    <ligand>
        <name>FMN</name>
        <dbReference type="ChEBI" id="CHEBI:58210"/>
    </ligand>
</feature>
<feature type="binding site" evidence="1">
    <location>
        <begin position="264"/>
        <end position="269"/>
    </location>
    <ligand>
        <name>substrate</name>
    </ligand>
</feature>
<feature type="binding site" evidence="1">
    <location>
        <position position="264"/>
    </location>
    <ligand>
        <name>FMN</name>
        <dbReference type="ChEBI" id="CHEBI:58210"/>
    </ligand>
</feature>
<feature type="binding site" evidence="1">
    <location>
        <position position="306"/>
    </location>
    <ligand>
        <name>FMN</name>
        <dbReference type="ChEBI" id="CHEBI:58210"/>
    </ligand>
</feature>
<feature type="binding site" evidence="1">
    <location>
        <begin position="335"/>
        <end position="336"/>
    </location>
    <ligand>
        <name>substrate</name>
    </ligand>
</feature>
<feature type="binding site" evidence="1">
    <location>
        <position position="358"/>
    </location>
    <ligand>
        <name>FMN</name>
        <dbReference type="ChEBI" id="CHEBI:58210"/>
    </ligand>
</feature>
<feature type="binding site" evidence="1">
    <location>
        <position position="387"/>
    </location>
    <ligand>
        <name>FMN</name>
        <dbReference type="ChEBI" id="CHEBI:58210"/>
    </ligand>
</feature>
<feature type="binding site" evidence="1">
    <location>
        <begin position="408"/>
        <end position="409"/>
    </location>
    <ligand>
        <name>FMN</name>
        <dbReference type="ChEBI" id="CHEBI:58210"/>
    </ligand>
</feature>
<feature type="modified residue" description="Phosphoserine" evidence="6">
    <location>
        <position position="168"/>
    </location>
</feature>
<evidence type="ECO:0000250" key="1"/>
<evidence type="ECO:0000255" key="2"/>
<evidence type="ECO:0000269" key="3">
    <source>
    </source>
</evidence>
<evidence type="ECO:0000269" key="4">
    <source>
    </source>
</evidence>
<evidence type="ECO:0000269" key="5">
    <source>
    </source>
</evidence>
<evidence type="ECO:0000269" key="6">
    <source>
    </source>
</evidence>
<evidence type="ECO:0000305" key="7"/>
<dbReference type="EC" id="1.3.5.2"/>
<dbReference type="EMBL" id="X65114">
    <property type="protein sequence ID" value="CAA46230.1"/>
    <property type="molecule type" value="mRNA"/>
</dbReference>
<dbReference type="EMBL" id="CU329670">
    <property type="protein sequence ID" value="CAB08175.1"/>
    <property type="molecule type" value="Genomic_DNA"/>
</dbReference>
<dbReference type="PIR" id="A46248">
    <property type="entry name" value="A46248"/>
</dbReference>
<dbReference type="RefSeq" id="NP_593317.1">
    <property type="nucleotide sequence ID" value="NM_001018748.2"/>
</dbReference>
<dbReference type="SMR" id="P32747"/>
<dbReference type="BioGRID" id="279230">
    <property type="interactions" value="46"/>
</dbReference>
<dbReference type="FunCoup" id="P32747">
    <property type="interactions" value="447"/>
</dbReference>
<dbReference type="STRING" id="284812.P32747"/>
<dbReference type="iPTMnet" id="P32747"/>
<dbReference type="SwissPalm" id="P32747"/>
<dbReference type="PaxDb" id="4896-SPAC57A10.12c.1"/>
<dbReference type="EnsemblFungi" id="SPAC57A10.12c.1">
    <property type="protein sequence ID" value="SPAC57A10.12c.1:pep"/>
    <property type="gene ID" value="SPAC57A10.12c"/>
</dbReference>
<dbReference type="GeneID" id="2542781"/>
<dbReference type="KEGG" id="spo:2542781"/>
<dbReference type="PomBase" id="SPAC57A10.12c">
    <property type="gene designation" value="ura3"/>
</dbReference>
<dbReference type="VEuPathDB" id="FungiDB:SPAC57A10.12c"/>
<dbReference type="eggNOG" id="KOG1436">
    <property type="taxonomic scope" value="Eukaryota"/>
</dbReference>
<dbReference type="HOGENOM" id="CLU_013640_4_3_1"/>
<dbReference type="InParanoid" id="P32747"/>
<dbReference type="OMA" id="VYCYSAL"/>
<dbReference type="PhylomeDB" id="P32747"/>
<dbReference type="Reactome" id="R-SPO-500753">
    <property type="pathway name" value="Pyrimidine biosynthesis"/>
</dbReference>
<dbReference type="SABIO-RK" id="P32747"/>
<dbReference type="UniPathway" id="UPA00070">
    <property type="reaction ID" value="UER00946"/>
</dbReference>
<dbReference type="PRO" id="PR:P32747"/>
<dbReference type="Proteomes" id="UP000002485">
    <property type="component" value="Chromosome I"/>
</dbReference>
<dbReference type="GO" id="GO:0005743">
    <property type="term" value="C:mitochondrial inner membrane"/>
    <property type="evidence" value="ECO:0000318"/>
    <property type="project" value="GO_Central"/>
</dbReference>
<dbReference type="GO" id="GO:0005739">
    <property type="term" value="C:mitochondrion"/>
    <property type="evidence" value="ECO:0000314"/>
    <property type="project" value="PomBase"/>
</dbReference>
<dbReference type="GO" id="GO:0106430">
    <property type="term" value="F:dihydroorotate dehydrogenase (quinone) activity"/>
    <property type="evidence" value="ECO:0007669"/>
    <property type="project" value="UniProtKB-EC"/>
</dbReference>
<dbReference type="GO" id="GO:0004152">
    <property type="term" value="F:dihydroorotate dehydrogenase activity"/>
    <property type="evidence" value="ECO:0000314"/>
    <property type="project" value="PomBase"/>
</dbReference>
<dbReference type="GO" id="GO:0006207">
    <property type="term" value="P:'de novo' pyrimidine nucleobase biosynthetic process"/>
    <property type="evidence" value="ECO:0000318"/>
    <property type="project" value="GO_Central"/>
</dbReference>
<dbReference type="GO" id="GO:0044205">
    <property type="term" value="P:'de novo' UMP biosynthetic process"/>
    <property type="evidence" value="ECO:0000314"/>
    <property type="project" value="PomBase"/>
</dbReference>
<dbReference type="GO" id="GO:0009220">
    <property type="term" value="P:pyrimidine ribonucleotide biosynthetic process"/>
    <property type="evidence" value="ECO:0000318"/>
    <property type="project" value="GO_Central"/>
</dbReference>
<dbReference type="CDD" id="cd04738">
    <property type="entry name" value="DHOD_2_like"/>
    <property type="match status" value="1"/>
</dbReference>
<dbReference type="FunFam" id="3.20.20.70:FF:000066">
    <property type="entry name" value="Dihydroorotate dehydrogenase (quinone), mitochondrial"/>
    <property type="match status" value="1"/>
</dbReference>
<dbReference type="Gene3D" id="3.20.20.70">
    <property type="entry name" value="Aldolase class I"/>
    <property type="match status" value="1"/>
</dbReference>
<dbReference type="InterPro" id="IPR013785">
    <property type="entry name" value="Aldolase_TIM"/>
</dbReference>
<dbReference type="InterPro" id="IPR050074">
    <property type="entry name" value="DHO_dehydrogenase"/>
</dbReference>
<dbReference type="InterPro" id="IPR005719">
    <property type="entry name" value="Dihydroorotate_DH_2"/>
</dbReference>
<dbReference type="InterPro" id="IPR005720">
    <property type="entry name" value="Dihydroorotate_DH_cat"/>
</dbReference>
<dbReference type="InterPro" id="IPR001295">
    <property type="entry name" value="Dihydroorotate_DH_CS"/>
</dbReference>
<dbReference type="NCBIfam" id="TIGR01036">
    <property type="entry name" value="pyrD_sub2"/>
    <property type="match status" value="1"/>
</dbReference>
<dbReference type="PANTHER" id="PTHR48109:SF4">
    <property type="entry name" value="DIHYDROOROTATE DEHYDROGENASE (QUINONE), MITOCHONDRIAL"/>
    <property type="match status" value="1"/>
</dbReference>
<dbReference type="PANTHER" id="PTHR48109">
    <property type="entry name" value="DIHYDROOROTATE DEHYDROGENASE (QUINONE), MITOCHONDRIAL-RELATED"/>
    <property type="match status" value="1"/>
</dbReference>
<dbReference type="Pfam" id="PF01180">
    <property type="entry name" value="DHO_dh"/>
    <property type="match status" value="1"/>
</dbReference>
<dbReference type="SUPFAM" id="SSF51395">
    <property type="entry name" value="FMN-linked oxidoreductases"/>
    <property type="match status" value="1"/>
</dbReference>
<dbReference type="PROSITE" id="PS00911">
    <property type="entry name" value="DHODEHASE_1"/>
    <property type="match status" value="1"/>
</dbReference>
<dbReference type="PROSITE" id="PS00912">
    <property type="entry name" value="DHODEHASE_2"/>
    <property type="match status" value="1"/>
</dbReference>
<protein>
    <recommendedName>
        <fullName>Dihydroorotate dehydrogenase (quinone), mitochondrial</fullName>
        <shortName>DHOD</shortName>
        <shortName>DHODase</shortName>
        <shortName>DHOdehase</shortName>
        <ecNumber>1.3.5.2</ecNumber>
    </recommendedName>
    <alternativeName>
        <fullName>Dihydroorotate oxidase</fullName>
    </alternativeName>
</protein>
<proteinExistence type="evidence at protein level"/>
<gene>
    <name type="primary">ura3</name>
    <name type="ORF">SPAC57A10.12c</name>
</gene>